<name>C92C5_MAIZE</name>
<keyword id="KW-0349">Heme</keyword>
<keyword id="KW-0408">Iron</keyword>
<keyword id="KW-0472">Membrane</keyword>
<keyword id="KW-0479">Metal-binding</keyword>
<keyword id="KW-0503">Monooxygenase</keyword>
<keyword id="KW-0560">Oxidoreductase</keyword>
<keyword id="KW-0611">Plant defense</keyword>
<keyword id="KW-1185">Reference proteome</keyword>
<keyword id="KW-0812">Transmembrane</keyword>
<keyword id="KW-1133">Transmembrane helix</keyword>
<dbReference type="EC" id="1.14.14.59" evidence="4"/>
<dbReference type="EC" id="1.14.14.58" evidence="4"/>
<dbReference type="EMBL" id="CM007650">
    <property type="protein sequence ID" value="ONM51434.1"/>
    <property type="molecule type" value="Genomic_DNA"/>
</dbReference>
<dbReference type="EMBL" id="EU955931">
    <property type="protein sequence ID" value="ACG28049.1"/>
    <property type="molecule type" value="mRNA"/>
</dbReference>
<dbReference type="RefSeq" id="XP_008652034.1">
    <property type="nucleotide sequence ID" value="XM_008653812.1"/>
</dbReference>
<dbReference type="SMR" id="A0A1D6HSP4"/>
<dbReference type="IntAct" id="A0A1D6HSP4">
    <property type="interactions" value="1"/>
</dbReference>
<dbReference type="STRING" id="4577.A0A1D6HSP4"/>
<dbReference type="PaxDb" id="4577-GRMZM2G102079_P01"/>
<dbReference type="EnsemblPlants" id="Zm00001eb300490_T001">
    <property type="protein sequence ID" value="Zm00001eb300490_P001"/>
    <property type="gene ID" value="Zm00001eb300490"/>
</dbReference>
<dbReference type="Gramene" id="Zm00001eb300490_T001">
    <property type="protein sequence ID" value="Zm00001eb300490_P001"/>
    <property type="gene ID" value="Zm00001eb300490"/>
</dbReference>
<dbReference type="KEGG" id="zma:103631958"/>
<dbReference type="MaizeGDB" id="9035643"/>
<dbReference type="eggNOG" id="KOG0156">
    <property type="taxonomic scope" value="Eukaryota"/>
</dbReference>
<dbReference type="InParanoid" id="A0A1D6HSP4"/>
<dbReference type="OMA" id="ELHYIDA"/>
<dbReference type="OrthoDB" id="1055148at2759"/>
<dbReference type="BRENDA" id="1.14.14.58">
    <property type="organism ID" value="6752"/>
</dbReference>
<dbReference type="BRENDA" id="1.14.14.59">
    <property type="organism ID" value="6752"/>
</dbReference>
<dbReference type="SABIO-RK" id="A0A1D6HSP4"/>
<dbReference type="UniPathway" id="UPA00213"/>
<dbReference type="Proteomes" id="UP000007305">
    <property type="component" value="Chromosome 7"/>
</dbReference>
<dbReference type="ExpressionAtlas" id="A0A1D6HSP4">
    <property type="expression patterns" value="baseline and differential"/>
</dbReference>
<dbReference type="GO" id="GO:0016020">
    <property type="term" value="C:membrane"/>
    <property type="evidence" value="ECO:0007669"/>
    <property type="project" value="UniProtKB-SubCell"/>
</dbReference>
<dbReference type="GO" id="GO:0097007">
    <property type="term" value="F:4,8,12-trimethyltrideca-1,3,7,11-tetraene synthase activity"/>
    <property type="evidence" value="ECO:0007669"/>
    <property type="project" value="RHEA"/>
</dbReference>
<dbReference type="GO" id="GO:0102171">
    <property type="term" value="F:DMNT synthase activity"/>
    <property type="evidence" value="ECO:0007669"/>
    <property type="project" value="UniProtKB-EC"/>
</dbReference>
<dbReference type="GO" id="GO:0020037">
    <property type="term" value="F:heme binding"/>
    <property type="evidence" value="ECO:0007669"/>
    <property type="project" value="InterPro"/>
</dbReference>
<dbReference type="GO" id="GO:0005506">
    <property type="term" value="F:iron ion binding"/>
    <property type="evidence" value="ECO:0007669"/>
    <property type="project" value="InterPro"/>
</dbReference>
<dbReference type="GO" id="GO:0010333">
    <property type="term" value="F:terpene synthase activity"/>
    <property type="evidence" value="ECO:0000314"/>
    <property type="project" value="UniProtKB"/>
</dbReference>
<dbReference type="GO" id="GO:0006952">
    <property type="term" value="P:defense response"/>
    <property type="evidence" value="ECO:0007669"/>
    <property type="project" value="UniProtKB-KW"/>
</dbReference>
<dbReference type="GO" id="GO:0080027">
    <property type="term" value="P:response to herbivore"/>
    <property type="evidence" value="ECO:0000270"/>
    <property type="project" value="UniProtKB"/>
</dbReference>
<dbReference type="GO" id="GO:0016114">
    <property type="term" value="P:terpenoid biosynthetic process"/>
    <property type="evidence" value="ECO:0000314"/>
    <property type="project" value="UniProtKB"/>
</dbReference>
<dbReference type="CDD" id="cd20618">
    <property type="entry name" value="CYP71_clan"/>
    <property type="match status" value="1"/>
</dbReference>
<dbReference type="FunFam" id="1.10.630.10:FF:000097">
    <property type="entry name" value="Cytochrome P-450 19"/>
    <property type="match status" value="1"/>
</dbReference>
<dbReference type="Gene3D" id="1.10.630.10">
    <property type="entry name" value="Cytochrome P450"/>
    <property type="match status" value="1"/>
</dbReference>
<dbReference type="InterPro" id="IPR001128">
    <property type="entry name" value="Cyt_P450"/>
</dbReference>
<dbReference type="InterPro" id="IPR017972">
    <property type="entry name" value="Cyt_P450_CS"/>
</dbReference>
<dbReference type="InterPro" id="IPR002401">
    <property type="entry name" value="Cyt_P450_E_grp-I"/>
</dbReference>
<dbReference type="InterPro" id="IPR036396">
    <property type="entry name" value="Cyt_P450_sf"/>
</dbReference>
<dbReference type="PANTHER" id="PTHR47944">
    <property type="entry name" value="CYTOCHROME P450 98A9"/>
    <property type="match status" value="1"/>
</dbReference>
<dbReference type="PANTHER" id="PTHR47944:SF11">
    <property type="entry name" value="DIMETHYLNONATRIENE SYNTHASE"/>
    <property type="match status" value="1"/>
</dbReference>
<dbReference type="Pfam" id="PF00067">
    <property type="entry name" value="p450"/>
    <property type="match status" value="1"/>
</dbReference>
<dbReference type="PRINTS" id="PR00463">
    <property type="entry name" value="EP450I"/>
</dbReference>
<dbReference type="PRINTS" id="PR00385">
    <property type="entry name" value="P450"/>
</dbReference>
<dbReference type="SUPFAM" id="SSF48264">
    <property type="entry name" value="Cytochrome P450"/>
    <property type="match status" value="1"/>
</dbReference>
<dbReference type="PROSITE" id="PS00086">
    <property type="entry name" value="CYTOCHROME_P450"/>
    <property type="match status" value="1"/>
</dbReference>
<feature type="chain" id="PRO_0000447524" description="Dimethylnonatriene synthase">
    <location>
        <begin position="1"/>
        <end position="531"/>
    </location>
</feature>
<feature type="transmembrane region" description="Helical" evidence="3">
    <location>
        <begin position="6"/>
        <end position="26"/>
    </location>
</feature>
<feature type="binding site" description="axial binding residue" evidence="1">
    <location>
        <position position="464"/>
    </location>
    <ligand>
        <name>heme</name>
        <dbReference type="ChEBI" id="CHEBI:30413"/>
    </ligand>
    <ligandPart>
        <name>Fe</name>
        <dbReference type="ChEBI" id="CHEBI:18248"/>
    </ligandPart>
</feature>
<feature type="sequence conflict" description="In Ref. 2; ACG28049." evidence="7" ref="2">
    <original>LYSATE</original>
    <variation>F</variation>
    <location>
        <begin position="526"/>
        <end position="531"/>
    </location>
</feature>
<sequence>MELASTMSVAMALAAAIFVVLCSVVASARGRREKALKLPPGPRGWPVLGSLGALAGALPPHRALAALAARHGPLMHLRLGSYHTVVASSADAARLVLRTHDSALADRPDTAAGEITSYGYLGIVHTPRGAYWRMARRLCATELFSARRVESFQDVRAQEMRALARGLFGCAAGRRAVAVREHVAGATMRNILRMAVGEKWSGCYGSPEGEAFRRSLDEAFAATGAVSNVGEWVPWLGWLDVQGFKRKMKRLHDLHDHFYEKILVDHEERRRLAQASGGEFVATDLVDVLLQLSEESTKLESESEARLPRDGVKALIQDIIAGGTESSAVTIEWAMAELLRHPEAMAKATDELDRVVGSGRWVAERDLPELHYIDAVVKETLRLHPVGPLLVPHYARERTVVAGYDVPAGARVLVNAWAIARDPASWPDAPDAFQPERFLGAAAAVDVRGAHFELLPFGSGRRICPAYDLAMKLVAAGVANLVHGFAWRLPDGVAAEDVSMEEHVGLSTRRKVPLFAVAEPRLPVHLYSATE</sequence>
<comment type="function">
    <text evidence="2 4 6">Involved in the biosynthesis of homoterpenes, attractants of herbivores parasitoids and predators (e.g. predatory mites and parasitoid wasps) (By similarity). Component of the volatile terpenes biosynthesis pathways (PubMed:30187155). Converts mainly nerolidol to dimethylnonatriene (DMNT) and, to a lower extent, geranyllinalool to trimethyltridecatetraene (TMTT) (PubMed:27662898).</text>
</comment>
<comment type="catalytic activity">
    <reaction evidence="4">
        <text>(6E,10E)-geranyllinalool + reduced [NADPH--hemoprotein reductase] + O2 = (3E,7E)-4,8,12-trimethyltrideca 1,3,7,11-tetraene + but-3-en-2-one + oxidized [NADPH--hemoprotein reductase] + 2 H2O + H(+)</text>
        <dbReference type="Rhea" id="RHEA:13545"/>
        <dbReference type="Rhea" id="RHEA-COMP:11964"/>
        <dbReference type="Rhea" id="RHEA-COMP:11965"/>
        <dbReference type="ChEBI" id="CHEBI:15377"/>
        <dbReference type="ChEBI" id="CHEBI:15378"/>
        <dbReference type="ChEBI" id="CHEBI:15379"/>
        <dbReference type="ChEBI" id="CHEBI:48058"/>
        <dbReference type="ChEBI" id="CHEBI:57618"/>
        <dbReference type="ChEBI" id="CHEBI:58210"/>
        <dbReference type="ChEBI" id="CHEBI:74299"/>
        <dbReference type="ChEBI" id="CHEBI:74322"/>
        <dbReference type="EC" id="1.14.14.58"/>
    </reaction>
    <physiologicalReaction direction="left-to-right" evidence="4">
        <dbReference type="Rhea" id="RHEA:13546"/>
    </physiologicalReaction>
</comment>
<comment type="catalytic activity">
    <reaction evidence="4">
        <text>(3S,6E)-nerolidol + reduced [NADPH--hemoprotein reductase] + O2 = (3E)-4,8-dimethylnona-1,3,7-triene + but-3-en-2-one + oxidized [NADPH--hemoprotein reductase] + 2 H2O + H(+)</text>
        <dbReference type="Rhea" id="RHEA:55424"/>
        <dbReference type="Rhea" id="RHEA-COMP:11964"/>
        <dbReference type="Rhea" id="RHEA-COMP:11965"/>
        <dbReference type="ChEBI" id="CHEBI:15377"/>
        <dbReference type="ChEBI" id="CHEBI:15378"/>
        <dbReference type="ChEBI" id="CHEBI:15379"/>
        <dbReference type="ChEBI" id="CHEBI:48058"/>
        <dbReference type="ChEBI" id="CHEBI:57618"/>
        <dbReference type="ChEBI" id="CHEBI:58210"/>
        <dbReference type="ChEBI" id="CHEBI:59958"/>
        <dbReference type="ChEBI" id="CHEBI:60158"/>
        <dbReference type="EC" id="1.14.14.59"/>
    </reaction>
    <physiologicalReaction direction="left-to-right" evidence="4">
        <dbReference type="Rhea" id="RHEA:55425"/>
    </physiologicalReaction>
</comment>
<comment type="cofactor">
    <cofactor evidence="1">
        <name>heme</name>
        <dbReference type="ChEBI" id="CHEBI:30413"/>
    </cofactor>
</comment>
<comment type="biophysicochemical properties">
    <kinetics>
        <KM evidence="4">14.2 uM for (E)-nerolidol</KM>
        <KM evidence="4">5.6 uM for (6E,10E)-geranyllinalool</KM>
    </kinetics>
</comment>
<comment type="pathway">
    <text evidence="8">Secondary metabolite biosynthesis; terpenoid biosynthesis.</text>
</comment>
<comment type="subcellular location">
    <subcellularLocation>
        <location evidence="3">Membrane</location>
        <topology evidence="3">Single-pass membrane protein</topology>
    </subcellularLocation>
</comment>
<comment type="induction">
    <text evidence="4">Strongly induced in response to herbivory-mediated wounding.</text>
</comment>
<comment type="disruption phenotype">
    <text evidence="4">Impaired biosynthesis of dimethylnonatriene (DMNT), but abnormal accumulation of (E)-nerolidol (PubMed:27662898). Reduced levels of trimethyltridecatetraene (TMTT) (PubMed:27662898).</text>
</comment>
<comment type="similarity">
    <text evidence="7">Belongs to the cytochrome P450 family.</text>
</comment>
<evidence type="ECO:0000250" key="1">
    <source>
        <dbReference type="UniProtKB" id="Q96242"/>
    </source>
</evidence>
<evidence type="ECO:0000250" key="2">
    <source>
        <dbReference type="UniProtKB" id="Q9LSF8"/>
    </source>
</evidence>
<evidence type="ECO:0000255" key="3"/>
<evidence type="ECO:0000269" key="4">
    <source>
    </source>
</evidence>
<evidence type="ECO:0000303" key="5">
    <source>
    </source>
</evidence>
<evidence type="ECO:0000303" key="6">
    <source>
    </source>
</evidence>
<evidence type="ECO:0000305" key="7"/>
<evidence type="ECO:0000305" key="8">
    <source>
    </source>
</evidence>
<evidence type="ECO:0000312" key="9">
    <source>
        <dbReference type="EMBL" id="ONM51434.1"/>
    </source>
</evidence>
<reference key="1">
    <citation type="journal article" date="2009" name="Science">
        <title>The B73 maize genome: complexity, diversity, and dynamics.</title>
        <authorList>
            <person name="Schnable P.S."/>
            <person name="Ware D."/>
            <person name="Fulton R.S."/>
            <person name="Stein J.C."/>
            <person name="Wei F."/>
            <person name="Pasternak S."/>
            <person name="Liang C."/>
            <person name="Zhang J."/>
            <person name="Fulton L."/>
            <person name="Graves T.A."/>
            <person name="Minx P."/>
            <person name="Reily A.D."/>
            <person name="Courtney L."/>
            <person name="Kruchowski S.S."/>
            <person name="Tomlinson C."/>
            <person name="Strong C."/>
            <person name="Delehaunty K."/>
            <person name="Fronick C."/>
            <person name="Courtney B."/>
            <person name="Rock S.M."/>
            <person name="Belter E."/>
            <person name="Du F."/>
            <person name="Kim K."/>
            <person name="Abbott R.M."/>
            <person name="Cotton M."/>
            <person name="Levy A."/>
            <person name="Marchetto P."/>
            <person name="Ochoa K."/>
            <person name="Jackson S.M."/>
            <person name="Gillam B."/>
            <person name="Chen W."/>
            <person name="Yan L."/>
            <person name="Higginbotham J."/>
            <person name="Cardenas M."/>
            <person name="Waligorski J."/>
            <person name="Applebaum E."/>
            <person name="Phelps L."/>
            <person name="Falcone J."/>
            <person name="Kanchi K."/>
            <person name="Thane T."/>
            <person name="Scimone A."/>
            <person name="Thane N."/>
            <person name="Henke J."/>
            <person name="Wang T."/>
            <person name="Ruppert J."/>
            <person name="Shah N."/>
            <person name="Rotter K."/>
            <person name="Hodges J."/>
            <person name="Ingenthron E."/>
            <person name="Cordes M."/>
            <person name="Kohlberg S."/>
            <person name="Sgro J."/>
            <person name="Delgado B."/>
            <person name="Mead K."/>
            <person name="Chinwalla A."/>
            <person name="Leonard S."/>
            <person name="Crouse K."/>
            <person name="Collura K."/>
            <person name="Kudrna D."/>
            <person name="Currie J."/>
            <person name="He R."/>
            <person name="Angelova A."/>
            <person name="Rajasekar S."/>
            <person name="Mueller T."/>
            <person name="Lomeli R."/>
            <person name="Scara G."/>
            <person name="Ko A."/>
            <person name="Delaney K."/>
            <person name="Wissotski M."/>
            <person name="Lopez G."/>
            <person name="Campos D."/>
            <person name="Braidotti M."/>
            <person name="Ashley E."/>
            <person name="Golser W."/>
            <person name="Kim H."/>
            <person name="Lee S."/>
            <person name="Lin J."/>
            <person name="Dujmic Z."/>
            <person name="Kim W."/>
            <person name="Talag J."/>
            <person name="Zuccolo A."/>
            <person name="Fan C."/>
            <person name="Sebastian A."/>
            <person name="Kramer M."/>
            <person name="Spiegel L."/>
            <person name="Nascimento L."/>
            <person name="Zutavern T."/>
            <person name="Miller B."/>
            <person name="Ambroise C."/>
            <person name="Muller S."/>
            <person name="Spooner W."/>
            <person name="Narechania A."/>
            <person name="Ren L."/>
            <person name="Wei S."/>
            <person name="Kumari S."/>
            <person name="Faga B."/>
            <person name="Levy M.J."/>
            <person name="McMahan L."/>
            <person name="Van Buren P."/>
            <person name="Vaughn M.W."/>
            <person name="Ying K."/>
            <person name="Yeh C.-T."/>
            <person name="Emrich S.J."/>
            <person name="Jia Y."/>
            <person name="Kalyanaraman A."/>
            <person name="Hsia A.-P."/>
            <person name="Barbazuk W.B."/>
            <person name="Baucom R.S."/>
            <person name="Brutnell T.P."/>
            <person name="Carpita N.C."/>
            <person name="Chaparro C."/>
            <person name="Chia J.-M."/>
            <person name="Deragon J.-M."/>
            <person name="Estill J.C."/>
            <person name="Fu Y."/>
            <person name="Jeddeloh J.A."/>
            <person name="Han Y."/>
            <person name="Lee H."/>
            <person name="Li P."/>
            <person name="Lisch D.R."/>
            <person name="Liu S."/>
            <person name="Liu Z."/>
            <person name="Nagel D.H."/>
            <person name="McCann M.C."/>
            <person name="SanMiguel P."/>
            <person name="Myers A.M."/>
            <person name="Nettleton D."/>
            <person name="Nguyen J."/>
            <person name="Penning B.W."/>
            <person name="Ponnala L."/>
            <person name="Schneider K.L."/>
            <person name="Schwartz D.C."/>
            <person name="Sharma A."/>
            <person name="Soderlund C."/>
            <person name="Springer N.M."/>
            <person name="Sun Q."/>
            <person name="Wang H."/>
            <person name="Waterman M."/>
            <person name="Westerman R."/>
            <person name="Wolfgruber T.K."/>
            <person name="Yang L."/>
            <person name="Yu Y."/>
            <person name="Zhang L."/>
            <person name="Zhou S."/>
            <person name="Zhu Q."/>
            <person name="Bennetzen J.L."/>
            <person name="Dawe R.K."/>
            <person name="Jiang J."/>
            <person name="Jiang N."/>
            <person name="Presting G.G."/>
            <person name="Wessler S.R."/>
            <person name="Aluru S."/>
            <person name="Martienssen R.A."/>
            <person name="Clifton S.W."/>
            <person name="McCombie W.R."/>
            <person name="Wing R.A."/>
            <person name="Wilson R.K."/>
        </authorList>
    </citation>
    <scope>NUCLEOTIDE SEQUENCE [LARGE SCALE GENOMIC DNA]</scope>
    <source>
        <strain>cv. B73</strain>
        <tissue>Seedling</tissue>
    </source>
</reference>
<reference key="2">
    <citation type="journal article" date="2009" name="Plant Mol. Biol.">
        <title>Insights into corn genes derived from large-scale cDNA sequencing.</title>
        <authorList>
            <person name="Alexandrov N.N."/>
            <person name="Brover V.V."/>
            <person name="Freidin S."/>
            <person name="Troukhan M.E."/>
            <person name="Tatarinova T.V."/>
            <person name="Zhang H."/>
            <person name="Swaller T.J."/>
            <person name="Lu Y.-P."/>
            <person name="Bouck J."/>
            <person name="Flavell R.B."/>
            <person name="Feldmann K.A."/>
        </authorList>
    </citation>
    <scope>NUCLEOTIDE SEQUENCE [LARGE SCALE MRNA]</scope>
</reference>
<reference key="3">
    <citation type="journal article" date="2016" name="Plant Cell">
        <title>Characterization of biosynthetic pathways for the production of the volatile homoterpenes DMNT and TMTT in Zea mays.</title>
        <authorList>
            <person name="Richter A."/>
            <person name="Schaff C."/>
            <person name="Zhang Z."/>
            <person name="Lipka A.E."/>
            <person name="Tian F."/>
            <person name="Koellner T.G."/>
            <person name="Schnee C."/>
            <person name="Preiss S."/>
            <person name="Irmisch S."/>
            <person name="Jander G."/>
            <person name="Boland W."/>
            <person name="Gershenzon J."/>
            <person name="Buckler E.S."/>
            <person name="Degenhardt J."/>
        </authorList>
    </citation>
    <scope>FUNCTION</scope>
    <scope>DISRUPTION PHENOTYPE</scope>
    <scope>CATALYTIC ACTIVITY</scope>
    <scope>BIOPHYSICOCHEMICAL PROPERTIES</scope>
    <scope>INDUCTION BY HERBIVORES</scope>
    <source>
        <strain>cv. B73</strain>
    </source>
</reference>
<reference key="4">
    <citation type="journal article" date="2019" name="Planta">
        <title>Biosynthesis and function of terpenoid defense compounds in maize (Zea mays).</title>
        <authorList>
            <person name="Block A.K."/>
            <person name="Vaughan M.M."/>
            <person name="Schmelz E.A."/>
            <person name="Christensen S.A."/>
        </authorList>
    </citation>
    <scope>PATHWAY</scope>
    <scope>REVIEW</scope>
</reference>
<gene>
    <name evidence="5" type="primary">CYP92C5</name>
    <name evidence="9" type="ORF">ZEAMMB73_Zm00001d018839</name>
</gene>
<proteinExistence type="evidence at protein level"/>
<accession>A0A1D6HSP4</accession>
<accession>B6ST66</accession>
<protein>
    <recommendedName>
        <fullName evidence="5">Dimethylnonatriene synthase</fullName>
        <ecNumber evidence="4">1.14.14.59</ecNumber>
    </recommendedName>
    <alternativeName>
        <fullName evidence="9">Cytochrome P-450 19</fullName>
    </alternativeName>
    <alternativeName>
        <fullName evidence="5">Cytochrome P450 92C5</fullName>
    </alternativeName>
    <alternativeName>
        <fullName evidence="5">Trimethyltridecatetraene synthase</fullName>
        <ecNumber evidence="4">1.14.14.58</ecNumber>
    </alternativeName>
</protein>
<organism>
    <name type="scientific">Zea mays</name>
    <name type="common">Maize</name>
    <dbReference type="NCBI Taxonomy" id="4577"/>
    <lineage>
        <taxon>Eukaryota</taxon>
        <taxon>Viridiplantae</taxon>
        <taxon>Streptophyta</taxon>
        <taxon>Embryophyta</taxon>
        <taxon>Tracheophyta</taxon>
        <taxon>Spermatophyta</taxon>
        <taxon>Magnoliopsida</taxon>
        <taxon>Liliopsida</taxon>
        <taxon>Poales</taxon>
        <taxon>Poaceae</taxon>
        <taxon>PACMAD clade</taxon>
        <taxon>Panicoideae</taxon>
        <taxon>Andropogonodae</taxon>
        <taxon>Andropogoneae</taxon>
        <taxon>Tripsacinae</taxon>
        <taxon>Zea</taxon>
    </lineage>
</organism>